<proteinExistence type="evidence at protein level"/>
<feature type="chain" id="PRO_0000191716" description="Choline transporter-like protein 2">
    <location>
        <begin position="1"/>
        <end position="705"/>
    </location>
</feature>
<feature type="topological domain" description="Cytoplasmic" evidence="3">
    <location>
        <begin position="1"/>
        <end position="31"/>
    </location>
</feature>
<feature type="transmembrane region" description="Helical" evidence="3">
    <location>
        <begin position="32"/>
        <end position="52"/>
    </location>
</feature>
<feature type="topological domain" description="Extracellular" evidence="3">
    <location>
        <begin position="53"/>
        <end position="231"/>
    </location>
</feature>
<feature type="transmembrane region" description="Helical" evidence="3">
    <location>
        <begin position="232"/>
        <end position="252"/>
    </location>
</feature>
<feature type="topological domain" description="Cytoplasmic" evidence="3">
    <location>
        <begin position="253"/>
        <end position="255"/>
    </location>
</feature>
<feature type="transmembrane region" description="Helical" evidence="3">
    <location>
        <begin position="256"/>
        <end position="276"/>
    </location>
</feature>
<feature type="topological domain" description="Extracellular" evidence="3">
    <location>
        <begin position="277"/>
        <end position="314"/>
    </location>
</feature>
<feature type="transmembrane region" description="Helical" evidence="3">
    <location>
        <begin position="315"/>
        <end position="335"/>
    </location>
</feature>
<feature type="topological domain" description="Cytoplasmic" evidence="3">
    <location>
        <begin position="336"/>
        <end position="363"/>
    </location>
</feature>
<feature type="transmembrane region" description="Helical" evidence="3">
    <location>
        <begin position="364"/>
        <end position="384"/>
    </location>
</feature>
<feature type="topological domain" description="Extracellular" evidence="3">
    <location>
        <begin position="385"/>
        <end position="455"/>
    </location>
</feature>
<feature type="transmembrane region" description="Helical" evidence="3">
    <location>
        <begin position="456"/>
        <end position="478"/>
    </location>
</feature>
<feature type="topological domain" description="Cytoplasmic" evidence="3">
    <location>
        <begin position="479"/>
        <end position="503"/>
    </location>
</feature>
<feature type="transmembrane region" description="Helical" evidence="3">
    <location>
        <begin position="504"/>
        <end position="524"/>
    </location>
</feature>
<feature type="topological domain" description="Extracellular" evidence="3">
    <location>
        <begin position="525"/>
        <end position="562"/>
    </location>
</feature>
<feature type="transmembrane region" description="Helical" evidence="3">
    <location>
        <begin position="563"/>
        <end position="583"/>
    </location>
</feature>
<feature type="topological domain" description="Cytoplasmic" evidence="3">
    <location>
        <begin position="584"/>
        <end position="598"/>
    </location>
</feature>
<feature type="transmembrane region" description="Helical" evidence="3">
    <location>
        <begin position="599"/>
        <end position="619"/>
    </location>
</feature>
<feature type="topological domain" description="Extracellular" evidence="3">
    <location>
        <begin position="620"/>
        <end position="637"/>
    </location>
</feature>
<feature type="transmembrane region" description="Helical" evidence="3">
    <location>
        <begin position="638"/>
        <end position="658"/>
    </location>
</feature>
<feature type="topological domain" description="Cytoplasmic" evidence="3">
    <location>
        <begin position="659"/>
        <end position="705"/>
    </location>
</feature>
<feature type="modified residue" description="Phosphothreonine" evidence="2">
    <location>
        <position position="12"/>
    </location>
</feature>
<feature type="glycosylation site" description="N-linked (GlcNAc...) asparagine" evidence="3">
    <location>
        <position position="186"/>
    </location>
</feature>
<feature type="glycosylation site" description="N-linked (GlcNAc...) asparagine" evidence="3">
    <location>
        <position position="199"/>
    </location>
</feature>
<feature type="glycosylation site" description="N-linked (GlcNAc...) asparagine" evidence="3">
    <location>
        <position position="414"/>
    </location>
</feature>
<reference key="1">
    <citation type="journal article" date="2004" name="J. Neurosci.">
        <title>Identification and characterization of choline transporter-like protein 2, an inner ear glycoprotein of 68 and 72 kDa that is the target of antibody-induced hearing loss.</title>
        <authorList>
            <person name="Nair T.S."/>
            <person name="Kozma K.E."/>
            <person name="Hoefling N.L."/>
            <person name="Kommareddi P.K."/>
            <person name="Ueda Y."/>
            <person name="Gong T.-W."/>
            <person name="Lomax M.I."/>
            <person name="Lansford C.D."/>
            <person name="Telian S.A."/>
            <person name="Satar B."/>
            <person name="Arts H.A."/>
            <person name="El-Kashlan H.K."/>
            <person name="Berryhill W.E."/>
            <person name="Raphael Y."/>
            <person name="Carey T.E."/>
        </authorList>
    </citation>
    <scope>NUCLEOTIDE SEQUENCE [MRNA]</scope>
    <scope>IDENTIFICATION BY MASS SPECTROMETRY</scope>
    <scope>TISSUE SPECIFICITY</scope>
    <scope>GLYCOSYLATION</scope>
    <scope>SUBCELLULAR LOCATION</scope>
    <source>
        <tissue>Inner ear</tissue>
    </source>
</reference>
<reference key="2">
    <citation type="journal article" date="2010" name="Protein J.">
        <title>Isoforms, expression, glycosylation, and tissue distribution of CTL2/SLC44A2.</title>
        <authorList>
            <person name="Kommareddi P.K."/>
            <person name="Nair T.S."/>
            <person name="Thang L.V."/>
            <person name="Galano M.M."/>
            <person name="Babu E."/>
            <person name="Ganapathy V."/>
            <person name="Kanazawa T."/>
            <person name="McHugh J.B."/>
            <person name="Carey T.E."/>
        </authorList>
    </citation>
    <scope>TISSUE SPECIFICITY</scope>
    <scope>GLYCOSYLATION</scope>
</reference>
<organism>
    <name type="scientific">Cavia porcellus</name>
    <name type="common">Guinea pig</name>
    <dbReference type="NCBI Taxonomy" id="10141"/>
    <lineage>
        <taxon>Eukaryota</taxon>
        <taxon>Metazoa</taxon>
        <taxon>Chordata</taxon>
        <taxon>Craniata</taxon>
        <taxon>Vertebrata</taxon>
        <taxon>Euteleostomi</taxon>
        <taxon>Mammalia</taxon>
        <taxon>Eutheria</taxon>
        <taxon>Euarchontoglires</taxon>
        <taxon>Glires</taxon>
        <taxon>Rodentia</taxon>
        <taxon>Hystricomorpha</taxon>
        <taxon>Caviidae</taxon>
        <taxon>Cavia</taxon>
    </lineage>
</organism>
<gene>
    <name type="primary">SLC44A2</name>
    <name type="synonym">CTL2</name>
</gene>
<comment type="function">
    <text evidence="2">Choline/H+ antiporter, mainly in mitochodria. Also acts as a low-affinity ethanolamine/H+ antiporter, regulating the supply of extracellular ethanolamine (Etn) for the CDP-Etn pathway, redistribute intracellular Etn and balance the CDP-Cho and CDP-Etn arms of the Kennedy pathway.</text>
</comment>
<comment type="catalytic activity">
    <reaction evidence="2">
        <text>choline(out) + n H(+)(in) = choline(in) + n H(+)(out)</text>
        <dbReference type="Rhea" id="RHEA:75463"/>
        <dbReference type="ChEBI" id="CHEBI:15354"/>
        <dbReference type="ChEBI" id="CHEBI:15378"/>
    </reaction>
</comment>
<comment type="catalytic activity">
    <reaction evidence="2">
        <text>ethanolamine(out) + n H(+)(in) = ethanolamine(in) + n H(+)(out)</text>
        <dbReference type="Rhea" id="RHEA:75467"/>
        <dbReference type="ChEBI" id="CHEBI:15378"/>
        <dbReference type="ChEBI" id="CHEBI:57603"/>
    </reaction>
</comment>
<comment type="subunit">
    <text evidence="2">Interacts with COCH.</text>
</comment>
<comment type="subcellular location">
    <subcellularLocation>
        <location evidence="4">Cell membrane</location>
        <topology evidence="4">Multi-pass membrane protein</topology>
    </subcellularLocation>
    <subcellularLocation>
        <location evidence="2">Mitochondrion outer membrane</location>
        <topology evidence="3">Multi-pass membrane protein</topology>
    </subcellularLocation>
    <text evidence="1">Mainly expressed in mitochondria.</text>
</comment>
<comment type="tissue specificity">
    <text evidence="4 5">Expressed at high levels in lung, colon and in supporting cells of the inner ear (at protein level). Progressively lower levels in brain, tongue, liver and kidney (at protein level). In the tongue, strongly expressed in epithelial cells and in nerves within the musculature. Within the nerves, expression observed in the perineurial cells of the nerve sheath, in the Schwann cells and myelinated nerve fibers (at protein level). In the kidney, prominent expression in glomeruli in the lining of Bowman's capsule and on the mesangial cells adjacent to the vessels within the glomerulus (at protein level). Strongly expressed on the membranes of splenocytes (at protein level).</text>
</comment>
<comment type="PTM">
    <text evidence="4 5">N-glycosylated; contains sialic acid. Not O-glycosylated.</text>
</comment>
<comment type="miscellaneous">
    <text>Antibody KHRI-3, which is directed against a N-linked carbohydrate of CTL2, causes hearing loss when infused in the organ of Corti.</text>
</comment>
<comment type="similarity">
    <text evidence="6">Belongs to the CTL (choline transporter-like) family.</text>
</comment>
<dbReference type="EMBL" id="AY233002">
    <property type="protein sequence ID" value="AAO74601.1"/>
    <property type="molecule type" value="mRNA"/>
</dbReference>
<dbReference type="RefSeq" id="NP_001166487.1">
    <property type="nucleotide sequence ID" value="NM_001173016.1"/>
</dbReference>
<dbReference type="SMR" id="Q810F1"/>
<dbReference type="FunCoup" id="Q810F1">
    <property type="interactions" value="1234"/>
</dbReference>
<dbReference type="STRING" id="10141.ENSCPOP00000012358"/>
<dbReference type="GlyCosmos" id="Q810F1">
    <property type="glycosylation" value="3 sites, No reported glycans"/>
</dbReference>
<dbReference type="GeneID" id="100135617"/>
<dbReference type="KEGG" id="cpoc:100135617"/>
<dbReference type="CTD" id="57153"/>
<dbReference type="eggNOG" id="KOG1362">
    <property type="taxonomic scope" value="Eukaryota"/>
</dbReference>
<dbReference type="InParanoid" id="Q810F1"/>
<dbReference type="OrthoDB" id="420519at2759"/>
<dbReference type="Proteomes" id="UP000005447">
    <property type="component" value="Unassembled WGS sequence"/>
</dbReference>
<dbReference type="GO" id="GO:0005741">
    <property type="term" value="C:mitochondrial outer membrane"/>
    <property type="evidence" value="ECO:0000250"/>
    <property type="project" value="UniProtKB"/>
</dbReference>
<dbReference type="GO" id="GO:0005886">
    <property type="term" value="C:plasma membrane"/>
    <property type="evidence" value="ECO:0000250"/>
    <property type="project" value="UniProtKB"/>
</dbReference>
<dbReference type="GO" id="GO:0015297">
    <property type="term" value="F:antiporter activity"/>
    <property type="evidence" value="ECO:0007669"/>
    <property type="project" value="UniProtKB-KW"/>
</dbReference>
<dbReference type="GO" id="GO:0015220">
    <property type="term" value="F:choline transmembrane transporter activity"/>
    <property type="evidence" value="ECO:0000250"/>
    <property type="project" value="UniProtKB"/>
</dbReference>
<dbReference type="GO" id="GO:0034228">
    <property type="term" value="F:ethanolamine transmembrane transporter activity"/>
    <property type="evidence" value="ECO:0000250"/>
    <property type="project" value="UniProtKB"/>
</dbReference>
<dbReference type="GO" id="GO:0015871">
    <property type="term" value="P:choline transport"/>
    <property type="evidence" value="ECO:0000250"/>
    <property type="project" value="UniProtKB"/>
</dbReference>
<dbReference type="GO" id="GO:0034229">
    <property type="term" value="P:ethanolamine transport"/>
    <property type="evidence" value="ECO:0000250"/>
    <property type="project" value="UniProtKB"/>
</dbReference>
<dbReference type="InterPro" id="IPR007603">
    <property type="entry name" value="Choline_transptr-like"/>
</dbReference>
<dbReference type="PANTHER" id="PTHR12385">
    <property type="entry name" value="CHOLINE TRANSPORTER-LIKE (SLC FAMILY 44)"/>
    <property type="match status" value="1"/>
</dbReference>
<dbReference type="PANTHER" id="PTHR12385:SF34">
    <property type="entry name" value="CHOLINE TRANSPORTER-LIKE PROTEIN 2"/>
    <property type="match status" value="1"/>
</dbReference>
<dbReference type="Pfam" id="PF04515">
    <property type="entry name" value="Choline_transpo"/>
    <property type="match status" value="1"/>
</dbReference>
<keyword id="KW-0050">Antiport</keyword>
<keyword id="KW-1003">Cell membrane</keyword>
<keyword id="KW-0325">Glycoprotein</keyword>
<keyword id="KW-0472">Membrane</keyword>
<keyword id="KW-0496">Mitochondrion</keyword>
<keyword id="KW-1000">Mitochondrion outer membrane</keyword>
<keyword id="KW-0597">Phosphoprotein</keyword>
<keyword id="KW-1185">Reference proteome</keyword>
<keyword id="KW-0730">Sialic acid</keyword>
<keyword id="KW-0812">Transmembrane</keyword>
<keyword id="KW-1133">Transmembrane helix</keyword>
<keyword id="KW-0813">Transport</keyword>
<accession>Q810F1</accession>
<name>CTL2_CAVPO</name>
<evidence type="ECO:0000250" key="1">
    <source>
        <dbReference type="UniProtKB" id="B4F795"/>
    </source>
</evidence>
<evidence type="ECO:0000250" key="2">
    <source>
        <dbReference type="UniProtKB" id="Q8IWA5"/>
    </source>
</evidence>
<evidence type="ECO:0000255" key="3"/>
<evidence type="ECO:0000269" key="4">
    <source>
    </source>
</evidence>
<evidence type="ECO:0000269" key="5">
    <source>
    </source>
</evidence>
<evidence type="ECO:0000305" key="6"/>
<protein>
    <recommendedName>
        <fullName>Choline transporter-like protein 2</fullName>
    </recommendedName>
    <alternativeName>
        <fullName>Inner ear supporting cell antigen</fullName>
        <shortName>IESCA</shortName>
    </alternativeName>
    <alternativeName>
        <fullName>Solute carrier family 44 member 2</fullName>
    </alternativeName>
</protein>
<sequence length="705" mass="79971">MEDQRKYGAYGTPQKYDPTFKGPIYNRGCTDVLCCVLLFLAIVGYVAVGLIAWTHGDPRKVIYPTDSRGEFCGQKGTKNANKPFLFYFNIVKCASPLVLLEFQCPTPQICVEKCPNRYLTLLNAWNTPEFEYYKQFCVPDFQKNKKGVAQVLRDGQCPAVLIPSKPLAQRCFPDIHAHKGVIMVGNATTYEDGHGSRKNITELVEGAKQANGILEARQLAMRIFEDYTVSWYWIVIGLVIAMVLSLLFIILLRFLAGIMVWVMIVLVILVLGYGIFHCYMEYARLRGEAGSDISVLDLGFQTDFRVYLHLRQTWLAFMIILSILEVIIILLLIFLRKRILIAIALIKEASRAVGYVMCSLLYPLVTFFLLCLCIAYWASTAVFLSTSNEAVYKILGDSSCPHQGQTCHPETFFNSTEAHACPNARCQFAFYGGESGYHRALLGLQIFNAFMFFWLANFVLALGQVTLAGAFASYYWALRKPDDMPAFPLFAAFGRALRYHTGSLAFGSLILAIVQIIRVILEYLDQRLKAAENKFAKFLMTCLKCCFWCLEKFIKFLNRNAYIMIAIYGTNFCTSARNAFFLLMRNIIRVAVLDKVTDFLFLLGKLLIVGSVGILAFFFFTHRIRIVQDTAPPLNYYWVPILTVIVGSYLIAHGFFSVYGMCVDTLFLCFLEDLERNNGSSERPYFMSSTLKKLLNKTNKKPVES</sequence>